<proteinExistence type="inferred from homology"/>
<evidence type="ECO:0000255" key="1">
    <source>
        <dbReference type="HAMAP-Rule" id="MF_00219"/>
    </source>
</evidence>
<sequence length="344" mass="37849">MMSLTITRPDDWHVHLRDGIQLNDTVRDISRYMGRAIIMPNLMPPATCTDTALAYRERIVAAKTPDNQFEPLMVLYLTDNTSPDEIRKAKATGLIHAAKLYPAGATTNSDSGVTSISNLYPVLEAMAEVGMLLLVHGEVTDSSIDIFDREKVFLETILAQVVTDFPKLKIVLEHITTSDAVEFVNKAPDNVAATITAHHLLYNRNHMLAGGIRPHFYCLPILKRNTHQQALIAAATSGSKKFFLGTDSAPHLKDKKEASCGCAGSYTAHAAIELYAEAFEAAGALDKLEAFASFYGADFYGLPRNTDTITLEKTPWQVPDSYPLANDRVVPIRAGEMLDWQVIS</sequence>
<reference key="1">
    <citation type="submission" date="2006-03" db="EMBL/GenBank/DDBJ databases">
        <title>Complete sequence of Shewanella denitrificans OS217.</title>
        <authorList>
            <consortium name="US DOE Joint Genome Institute"/>
            <person name="Copeland A."/>
            <person name="Lucas S."/>
            <person name="Lapidus A."/>
            <person name="Barry K."/>
            <person name="Detter J.C."/>
            <person name="Glavina del Rio T."/>
            <person name="Hammon N."/>
            <person name="Israni S."/>
            <person name="Dalin E."/>
            <person name="Tice H."/>
            <person name="Pitluck S."/>
            <person name="Brettin T."/>
            <person name="Bruce D."/>
            <person name="Han C."/>
            <person name="Tapia R."/>
            <person name="Gilna P."/>
            <person name="Kiss H."/>
            <person name="Schmutz J."/>
            <person name="Larimer F."/>
            <person name="Land M."/>
            <person name="Hauser L."/>
            <person name="Kyrpides N."/>
            <person name="Lykidis A."/>
            <person name="Richardson P."/>
        </authorList>
    </citation>
    <scope>NUCLEOTIDE SEQUENCE [LARGE SCALE GENOMIC DNA]</scope>
    <source>
        <strain>OS217 / ATCC BAA-1090 / DSM 15013</strain>
    </source>
</reference>
<name>PYRC_SHEDO</name>
<keyword id="KW-0378">Hydrolase</keyword>
<keyword id="KW-0479">Metal-binding</keyword>
<keyword id="KW-0665">Pyrimidine biosynthesis</keyword>
<keyword id="KW-1185">Reference proteome</keyword>
<keyword id="KW-0862">Zinc</keyword>
<accession>Q12NL3</accession>
<comment type="function">
    <text evidence="1">Catalyzes the reversible cyclization of carbamoyl aspartate to dihydroorotate.</text>
</comment>
<comment type="catalytic activity">
    <reaction evidence="1">
        <text>(S)-dihydroorotate + H2O = N-carbamoyl-L-aspartate + H(+)</text>
        <dbReference type="Rhea" id="RHEA:24296"/>
        <dbReference type="ChEBI" id="CHEBI:15377"/>
        <dbReference type="ChEBI" id="CHEBI:15378"/>
        <dbReference type="ChEBI" id="CHEBI:30864"/>
        <dbReference type="ChEBI" id="CHEBI:32814"/>
        <dbReference type="EC" id="3.5.2.3"/>
    </reaction>
</comment>
<comment type="cofactor">
    <cofactor evidence="1">
        <name>Zn(2+)</name>
        <dbReference type="ChEBI" id="CHEBI:29105"/>
    </cofactor>
    <text evidence="1">Binds 2 Zn(2+) ions per subunit.</text>
</comment>
<comment type="pathway">
    <text evidence="1">Pyrimidine metabolism; UMP biosynthesis via de novo pathway; (S)-dihydroorotate from bicarbonate: step 3/3.</text>
</comment>
<comment type="subunit">
    <text evidence="1">Homodimer.</text>
</comment>
<comment type="similarity">
    <text evidence="1">Belongs to the metallo-dependent hydrolases superfamily. DHOase family. Class II DHOase subfamily.</text>
</comment>
<feature type="chain" id="PRO_1000024053" description="Dihydroorotase">
    <location>
        <begin position="1"/>
        <end position="344"/>
    </location>
</feature>
<feature type="active site" evidence="1">
    <location>
        <position position="247"/>
    </location>
</feature>
<feature type="binding site" evidence="1">
    <location>
        <position position="13"/>
    </location>
    <ligand>
        <name>Zn(2+)</name>
        <dbReference type="ChEBI" id="CHEBI:29105"/>
        <label>1</label>
    </ligand>
</feature>
<feature type="binding site" evidence="1">
    <location>
        <begin position="15"/>
        <end position="17"/>
    </location>
    <ligand>
        <name>substrate</name>
    </ligand>
</feature>
<feature type="binding site" evidence="1">
    <location>
        <position position="15"/>
    </location>
    <ligand>
        <name>Zn(2+)</name>
        <dbReference type="ChEBI" id="CHEBI:29105"/>
        <label>1</label>
    </ligand>
</feature>
<feature type="binding site" evidence="1">
    <location>
        <position position="41"/>
    </location>
    <ligand>
        <name>substrate</name>
    </ligand>
</feature>
<feature type="binding site" description="via carbamate group" evidence="1">
    <location>
        <position position="99"/>
    </location>
    <ligand>
        <name>Zn(2+)</name>
        <dbReference type="ChEBI" id="CHEBI:29105"/>
        <label>1</label>
    </ligand>
</feature>
<feature type="binding site" description="via carbamate group" evidence="1">
    <location>
        <position position="99"/>
    </location>
    <ligand>
        <name>Zn(2+)</name>
        <dbReference type="ChEBI" id="CHEBI:29105"/>
        <label>2</label>
    </ligand>
</feature>
<feature type="binding site" evidence="1">
    <location>
        <position position="136"/>
    </location>
    <ligand>
        <name>substrate</name>
    </ligand>
</feature>
<feature type="binding site" evidence="1">
    <location>
        <position position="136"/>
    </location>
    <ligand>
        <name>Zn(2+)</name>
        <dbReference type="ChEBI" id="CHEBI:29105"/>
        <label>2</label>
    </ligand>
</feature>
<feature type="binding site" evidence="1">
    <location>
        <position position="174"/>
    </location>
    <ligand>
        <name>Zn(2+)</name>
        <dbReference type="ChEBI" id="CHEBI:29105"/>
        <label>2</label>
    </ligand>
</feature>
<feature type="binding site" evidence="1">
    <location>
        <position position="219"/>
    </location>
    <ligand>
        <name>substrate</name>
    </ligand>
</feature>
<feature type="binding site" evidence="1">
    <location>
        <position position="247"/>
    </location>
    <ligand>
        <name>Zn(2+)</name>
        <dbReference type="ChEBI" id="CHEBI:29105"/>
        <label>1</label>
    </ligand>
</feature>
<feature type="binding site" evidence="1">
    <location>
        <position position="251"/>
    </location>
    <ligand>
        <name>substrate</name>
    </ligand>
</feature>
<feature type="binding site" evidence="1">
    <location>
        <position position="263"/>
    </location>
    <ligand>
        <name>substrate</name>
    </ligand>
</feature>
<feature type="modified residue" description="N6-carboxylysine" evidence="1">
    <location>
        <position position="99"/>
    </location>
</feature>
<dbReference type="EC" id="3.5.2.3" evidence="1"/>
<dbReference type="EMBL" id="CP000302">
    <property type="protein sequence ID" value="ABE54963.1"/>
    <property type="molecule type" value="Genomic_DNA"/>
</dbReference>
<dbReference type="RefSeq" id="WP_011496121.1">
    <property type="nucleotide sequence ID" value="NC_007954.1"/>
</dbReference>
<dbReference type="SMR" id="Q12NL3"/>
<dbReference type="STRING" id="318161.Sden_1679"/>
<dbReference type="MEROPS" id="M38.A02"/>
<dbReference type="KEGG" id="sdn:Sden_1679"/>
<dbReference type="eggNOG" id="COG0418">
    <property type="taxonomic scope" value="Bacteria"/>
</dbReference>
<dbReference type="HOGENOM" id="CLU_041558_1_0_6"/>
<dbReference type="OrthoDB" id="9808095at2"/>
<dbReference type="UniPathway" id="UPA00070">
    <property type="reaction ID" value="UER00117"/>
</dbReference>
<dbReference type="Proteomes" id="UP000001982">
    <property type="component" value="Chromosome"/>
</dbReference>
<dbReference type="GO" id="GO:0005829">
    <property type="term" value="C:cytosol"/>
    <property type="evidence" value="ECO:0007669"/>
    <property type="project" value="TreeGrafter"/>
</dbReference>
<dbReference type="GO" id="GO:0004151">
    <property type="term" value="F:dihydroorotase activity"/>
    <property type="evidence" value="ECO:0007669"/>
    <property type="project" value="UniProtKB-UniRule"/>
</dbReference>
<dbReference type="GO" id="GO:0008270">
    <property type="term" value="F:zinc ion binding"/>
    <property type="evidence" value="ECO:0007669"/>
    <property type="project" value="UniProtKB-UniRule"/>
</dbReference>
<dbReference type="GO" id="GO:0006207">
    <property type="term" value="P:'de novo' pyrimidine nucleobase biosynthetic process"/>
    <property type="evidence" value="ECO:0007669"/>
    <property type="project" value="TreeGrafter"/>
</dbReference>
<dbReference type="GO" id="GO:0044205">
    <property type="term" value="P:'de novo' UMP biosynthetic process"/>
    <property type="evidence" value="ECO:0007669"/>
    <property type="project" value="UniProtKB-UniRule"/>
</dbReference>
<dbReference type="CDD" id="cd01294">
    <property type="entry name" value="DHOase"/>
    <property type="match status" value="1"/>
</dbReference>
<dbReference type="FunFam" id="3.20.20.140:FF:000006">
    <property type="entry name" value="Dihydroorotase"/>
    <property type="match status" value="1"/>
</dbReference>
<dbReference type="Gene3D" id="3.20.20.140">
    <property type="entry name" value="Metal-dependent hydrolases"/>
    <property type="match status" value="1"/>
</dbReference>
<dbReference type="HAMAP" id="MF_00219">
    <property type="entry name" value="PyrC_classII"/>
    <property type="match status" value="1"/>
</dbReference>
<dbReference type="InterPro" id="IPR006680">
    <property type="entry name" value="Amidohydro-rel"/>
</dbReference>
<dbReference type="InterPro" id="IPR004721">
    <property type="entry name" value="DHOdimr"/>
</dbReference>
<dbReference type="InterPro" id="IPR002195">
    <property type="entry name" value="Dihydroorotase_CS"/>
</dbReference>
<dbReference type="InterPro" id="IPR032466">
    <property type="entry name" value="Metal_Hydrolase"/>
</dbReference>
<dbReference type="NCBIfam" id="TIGR00856">
    <property type="entry name" value="pyrC_dimer"/>
    <property type="match status" value="1"/>
</dbReference>
<dbReference type="PANTHER" id="PTHR43137">
    <property type="entry name" value="DIHYDROOROTASE"/>
    <property type="match status" value="1"/>
</dbReference>
<dbReference type="PANTHER" id="PTHR43137:SF1">
    <property type="entry name" value="DIHYDROOROTASE"/>
    <property type="match status" value="1"/>
</dbReference>
<dbReference type="Pfam" id="PF01979">
    <property type="entry name" value="Amidohydro_1"/>
    <property type="match status" value="1"/>
</dbReference>
<dbReference type="PIRSF" id="PIRSF001237">
    <property type="entry name" value="DHOdimr"/>
    <property type="match status" value="1"/>
</dbReference>
<dbReference type="SUPFAM" id="SSF51556">
    <property type="entry name" value="Metallo-dependent hydrolases"/>
    <property type="match status" value="1"/>
</dbReference>
<dbReference type="PROSITE" id="PS00482">
    <property type="entry name" value="DIHYDROOROTASE_1"/>
    <property type="match status" value="1"/>
</dbReference>
<dbReference type="PROSITE" id="PS00483">
    <property type="entry name" value="DIHYDROOROTASE_2"/>
    <property type="match status" value="1"/>
</dbReference>
<protein>
    <recommendedName>
        <fullName evidence="1">Dihydroorotase</fullName>
        <shortName evidence="1">DHOase</shortName>
        <ecNumber evidence="1">3.5.2.3</ecNumber>
    </recommendedName>
</protein>
<organism>
    <name type="scientific">Shewanella denitrificans (strain OS217 / ATCC BAA-1090 / DSM 15013)</name>
    <dbReference type="NCBI Taxonomy" id="318161"/>
    <lineage>
        <taxon>Bacteria</taxon>
        <taxon>Pseudomonadati</taxon>
        <taxon>Pseudomonadota</taxon>
        <taxon>Gammaproteobacteria</taxon>
        <taxon>Alteromonadales</taxon>
        <taxon>Shewanellaceae</taxon>
        <taxon>Shewanella</taxon>
    </lineage>
</organism>
<gene>
    <name evidence="1" type="primary">pyrC</name>
    <name type="ordered locus">Sden_1679</name>
</gene>